<proteinExistence type="evidence at transcript level"/>
<comment type="function">
    <text evidence="1">Acts as a transcriptional regulator. Probably redox-responsive. The apo- but not holo-form probably binds DNA (By similarity).</text>
</comment>
<comment type="cofactor">
    <cofactor evidence="1">
        <name>[4Fe-4S] cluster</name>
        <dbReference type="ChEBI" id="CHEBI:49883"/>
    </cofactor>
    <text evidence="1">Binds 1 [4Fe-4S] cluster per subunit. Following nitrosylation of the [4Fe-4S] cluster binds 1 [4Fe-8(NO)] cluster per subunit.</text>
</comment>
<comment type="subcellular location">
    <subcellularLocation>
        <location evidence="1">Cytoplasm</location>
    </subcellularLocation>
</comment>
<comment type="induction">
    <text evidence="3">Repressed upon infection with mycobacteriophage TM4, and also by expression of the virus paralog whiBTM4 (AC Q9ZX29).</text>
</comment>
<comment type="PTM">
    <text evidence="1">The Fe-S cluster can be nitrosylated by nitric oxide (NO).</text>
</comment>
<comment type="PTM">
    <text evidence="1">Upon Fe-S cluster removal intramolecular disulfide bonds are formed.</text>
</comment>
<comment type="similarity">
    <text evidence="4">Belongs to the WhiB family.</text>
</comment>
<reference key="1">
    <citation type="submission" date="2006-10" db="EMBL/GenBank/DDBJ databases">
        <authorList>
            <person name="Fleischmann R.D."/>
            <person name="Dodson R.J."/>
            <person name="Haft D.H."/>
            <person name="Merkel J.S."/>
            <person name="Nelson W.C."/>
            <person name="Fraser C.M."/>
        </authorList>
    </citation>
    <scope>NUCLEOTIDE SEQUENCE [LARGE SCALE GENOMIC DNA]</scope>
    <source>
        <strain>ATCC 700084 / mc(2)155</strain>
    </source>
</reference>
<reference key="2">
    <citation type="journal article" date="2007" name="Genome Biol.">
        <title>Interrupted coding sequences in Mycobacterium smegmatis: authentic mutations or sequencing errors?</title>
        <authorList>
            <person name="Deshayes C."/>
            <person name="Perrodou E."/>
            <person name="Gallien S."/>
            <person name="Euphrasie D."/>
            <person name="Schaeffer C."/>
            <person name="Van-Dorsselaer A."/>
            <person name="Poch O."/>
            <person name="Lecompte O."/>
            <person name="Reyrat J.-M."/>
        </authorList>
    </citation>
    <scope>NUCLEOTIDE SEQUENCE [LARGE SCALE GENOMIC DNA]</scope>
    <source>
        <strain>ATCC 700084 / mc(2)155</strain>
    </source>
</reference>
<reference key="3">
    <citation type="journal article" date="2009" name="Genome Res.">
        <title>Ortho-proteogenomics: multiple proteomes investigation through orthology and a new MS-based protocol.</title>
        <authorList>
            <person name="Gallien S."/>
            <person name="Perrodou E."/>
            <person name="Carapito C."/>
            <person name="Deshayes C."/>
            <person name="Reyrat J.-M."/>
            <person name="Van Dorsselaer A."/>
            <person name="Poch O."/>
            <person name="Schaeffer C."/>
            <person name="Lecompte O."/>
        </authorList>
    </citation>
    <scope>NUCLEOTIDE SEQUENCE [LARGE SCALE GENOMIC DNA]</scope>
    <source>
        <strain>ATCC 700084 / mc(2)155</strain>
    </source>
</reference>
<reference key="4">
    <citation type="journal article" date="2010" name="Mol. Microbiol.">
        <title>Insights into the function of the WhiB-like protein of mycobacteriophage TM4--a transcriptional inhibitor of WhiB2.</title>
        <authorList>
            <person name="Rybniker J."/>
            <person name="Nowag A."/>
            <person name="van Gumpel E."/>
            <person name="Nissen N."/>
            <person name="Robinson N."/>
            <person name="Plum G."/>
            <person name="Hartmann P."/>
        </authorList>
    </citation>
    <scope>INDUCTION</scope>
    <source>
        <strain>ATCC 700084 / mc(2)155</strain>
    </source>
</reference>
<feature type="chain" id="PRO_0000420393" description="Transcriptional regulator WhiB2">
    <location>
        <begin position="1"/>
        <end position="129"/>
    </location>
</feature>
<feature type="domain" description="4Fe-4S Wbl-type">
    <location>
        <begin position="66"/>
        <end position="123"/>
    </location>
</feature>
<feature type="region of interest" description="Disordered" evidence="2">
    <location>
        <begin position="23"/>
        <end position="45"/>
    </location>
</feature>
<feature type="binding site" evidence="1">
    <location>
        <position position="67"/>
    </location>
    <ligand>
        <name>[4Fe-4S] cluster</name>
        <dbReference type="ChEBI" id="CHEBI:49883"/>
    </ligand>
</feature>
<feature type="binding site" evidence="1">
    <location>
        <position position="90"/>
    </location>
    <ligand>
        <name>[4Fe-4S] cluster</name>
        <dbReference type="ChEBI" id="CHEBI:49883"/>
    </ligand>
</feature>
<feature type="binding site" evidence="1">
    <location>
        <position position="93"/>
    </location>
    <ligand>
        <name>[4Fe-4S] cluster</name>
        <dbReference type="ChEBI" id="CHEBI:49883"/>
    </ligand>
</feature>
<feature type="binding site" evidence="1">
    <location>
        <position position="99"/>
    </location>
    <ligand>
        <name>[4Fe-4S] cluster</name>
        <dbReference type="ChEBI" id="CHEBI:49883"/>
    </ligand>
</feature>
<evidence type="ECO:0000250" key="1"/>
<evidence type="ECO:0000256" key="2">
    <source>
        <dbReference type="SAM" id="MobiDB-lite"/>
    </source>
</evidence>
<evidence type="ECO:0000269" key="3">
    <source>
    </source>
</evidence>
<evidence type="ECO:0000305" key="4"/>
<name>WHIB2_MYCS2</name>
<accession>A0QTG3</accession>
<sequence>MSYESGDFDRVVRFDNRLLGSVSHAPHIDTGSTPTGAAGRPQLSLVPDSFDVAPEAEEDQWQERALCAQTDPEAFFPEKGGSTREAKRICQGCEVRDACLEYALAHDERFGIWGGLSERERRRLKRGII</sequence>
<protein>
    <recommendedName>
        <fullName>Transcriptional regulator WhiB2</fullName>
    </recommendedName>
</protein>
<organism>
    <name type="scientific">Mycolicibacterium smegmatis (strain ATCC 700084 / mc(2)155)</name>
    <name type="common">Mycobacterium smegmatis</name>
    <dbReference type="NCBI Taxonomy" id="246196"/>
    <lineage>
        <taxon>Bacteria</taxon>
        <taxon>Bacillati</taxon>
        <taxon>Actinomycetota</taxon>
        <taxon>Actinomycetes</taxon>
        <taxon>Mycobacteriales</taxon>
        <taxon>Mycobacteriaceae</taxon>
        <taxon>Mycolicibacterium</taxon>
    </lineage>
</organism>
<dbReference type="EMBL" id="CP000480">
    <property type="protein sequence ID" value="ABK74322.1"/>
    <property type="molecule type" value="Genomic_DNA"/>
</dbReference>
<dbReference type="EMBL" id="CP001663">
    <property type="protein sequence ID" value="AFP38261.1"/>
    <property type="molecule type" value="Genomic_DNA"/>
</dbReference>
<dbReference type="RefSeq" id="WP_003893222.1">
    <property type="nucleotide sequence ID" value="NZ_SIJM01000028.1"/>
</dbReference>
<dbReference type="RefSeq" id="YP_886201.1">
    <property type="nucleotide sequence ID" value="NC_008596.1"/>
</dbReference>
<dbReference type="SMR" id="A0QTG3"/>
<dbReference type="STRING" id="246196.MSMEG_1831"/>
<dbReference type="PaxDb" id="246196-MSMEI_1789"/>
<dbReference type="KEGG" id="msb:LJ00_09130"/>
<dbReference type="KEGG" id="msg:MSMEI_1789"/>
<dbReference type="KEGG" id="msm:MSMEG_1831"/>
<dbReference type="PATRIC" id="fig|246196.19.peg.1813"/>
<dbReference type="eggNOG" id="ENOG5032RUK">
    <property type="taxonomic scope" value="Bacteria"/>
</dbReference>
<dbReference type="OrthoDB" id="5192305at2"/>
<dbReference type="Proteomes" id="UP000000757">
    <property type="component" value="Chromosome"/>
</dbReference>
<dbReference type="Proteomes" id="UP000006158">
    <property type="component" value="Chromosome"/>
</dbReference>
<dbReference type="GO" id="GO:0005737">
    <property type="term" value="C:cytoplasm"/>
    <property type="evidence" value="ECO:0007669"/>
    <property type="project" value="UniProtKB-SubCell"/>
</dbReference>
<dbReference type="GO" id="GO:0051539">
    <property type="term" value="F:4 iron, 4 sulfur cluster binding"/>
    <property type="evidence" value="ECO:0007669"/>
    <property type="project" value="UniProtKB-UniRule"/>
</dbReference>
<dbReference type="GO" id="GO:0035731">
    <property type="term" value="F:dinitrosyl-iron complex binding"/>
    <property type="evidence" value="ECO:0007669"/>
    <property type="project" value="UniProtKB-UniRule"/>
</dbReference>
<dbReference type="GO" id="GO:0003677">
    <property type="term" value="F:DNA binding"/>
    <property type="evidence" value="ECO:0007669"/>
    <property type="project" value="UniProtKB-UniRule"/>
</dbReference>
<dbReference type="GO" id="GO:0046872">
    <property type="term" value="F:metal ion binding"/>
    <property type="evidence" value="ECO:0007669"/>
    <property type="project" value="UniProtKB-KW"/>
</dbReference>
<dbReference type="GO" id="GO:0047134">
    <property type="term" value="F:protein-disulfide reductase [NAD(P)H] activity"/>
    <property type="evidence" value="ECO:0007669"/>
    <property type="project" value="TreeGrafter"/>
</dbReference>
<dbReference type="GO" id="GO:0045454">
    <property type="term" value="P:cell redox homeostasis"/>
    <property type="evidence" value="ECO:0007669"/>
    <property type="project" value="TreeGrafter"/>
</dbReference>
<dbReference type="GO" id="GO:0045892">
    <property type="term" value="P:negative regulation of DNA-templated transcription"/>
    <property type="evidence" value="ECO:0007669"/>
    <property type="project" value="TreeGrafter"/>
</dbReference>
<dbReference type="HAMAP" id="MF_01479">
    <property type="entry name" value="WhiB"/>
    <property type="match status" value="1"/>
</dbReference>
<dbReference type="InterPro" id="IPR034768">
    <property type="entry name" value="4FE4S_WBL"/>
</dbReference>
<dbReference type="InterPro" id="IPR003482">
    <property type="entry name" value="Whib"/>
</dbReference>
<dbReference type="PANTHER" id="PTHR38839:SF4">
    <property type="entry name" value="TRANSCRIPTIONAL REGULATOR WHIB"/>
    <property type="match status" value="1"/>
</dbReference>
<dbReference type="PANTHER" id="PTHR38839">
    <property type="entry name" value="TRANSCRIPTIONAL REGULATOR WHID-RELATED"/>
    <property type="match status" value="1"/>
</dbReference>
<dbReference type="Pfam" id="PF02467">
    <property type="entry name" value="Whib"/>
    <property type="match status" value="1"/>
</dbReference>
<dbReference type="PROSITE" id="PS51674">
    <property type="entry name" value="4FE4S_WBL"/>
    <property type="match status" value="1"/>
</dbReference>
<gene>
    <name type="primary">whiB2</name>
    <name type="synonym">whmD</name>
    <name type="ordered locus">MSMEG_1831</name>
    <name type="ordered locus">MSMEI_1789</name>
</gene>
<keyword id="KW-0004">4Fe-4S</keyword>
<keyword id="KW-0963">Cytoplasm</keyword>
<keyword id="KW-1015">Disulfide bond</keyword>
<keyword id="KW-0238">DNA-binding</keyword>
<keyword id="KW-0408">Iron</keyword>
<keyword id="KW-0411">Iron-sulfur</keyword>
<keyword id="KW-0479">Metal-binding</keyword>
<keyword id="KW-1185">Reference proteome</keyword>
<keyword id="KW-0804">Transcription</keyword>
<keyword id="KW-0805">Transcription regulation</keyword>